<feature type="chain" id="PRO_1000122164" description="Integration host factor subunit alpha">
    <location>
        <begin position="1"/>
        <end position="99"/>
    </location>
</feature>
<feature type="region of interest" description="Disordered" evidence="2">
    <location>
        <begin position="49"/>
        <end position="75"/>
    </location>
</feature>
<protein>
    <recommendedName>
        <fullName evidence="1">Integration host factor subunit alpha</fullName>
        <shortName evidence="1">IHF-alpha</shortName>
    </recommendedName>
</protein>
<proteinExistence type="inferred from homology"/>
<gene>
    <name evidence="1" type="primary">ihfA</name>
    <name evidence="1" type="synonym">himA</name>
    <name type="ordered locus">SNSL254_A1450</name>
</gene>
<dbReference type="EMBL" id="CP001113">
    <property type="protein sequence ID" value="ACF62481.1"/>
    <property type="molecule type" value="Genomic_DNA"/>
</dbReference>
<dbReference type="RefSeq" id="WP_001229266.1">
    <property type="nucleotide sequence ID" value="NZ_CCMR01000003.1"/>
</dbReference>
<dbReference type="SMR" id="B4T4N4"/>
<dbReference type="GeneID" id="92828695"/>
<dbReference type="KEGG" id="see:SNSL254_A1450"/>
<dbReference type="HOGENOM" id="CLU_105066_1_3_6"/>
<dbReference type="Proteomes" id="UP000008824">
    <property type="component" value="Chromosome"/>
</dbReference>
<dbReference type="GO" id="GO:0005829">
    <property type="term" value="C:cytosol"/>
    <property type="evidence" value="ECO:0007669"/>
    <property type="project" value="TreeGrafter"/>
</dbReference>
<dbReference type="GO" id="GO:0003677">
    <property type="term" value="F:DNA binding"/>
    <property type="evidence" value="ECO:0007669"/>
    <property type="project" value="UniProtKB-UniRule"/>
</dbReference>
<dbReference type="GO" id="GO:0030527">
    <property type="term" value="F:structural constituent of chromatin"/>
    <property type="evidence" value="ECO:0007669"/>
    <property type="project" value="InterPro"/>
</dbReference>
<dbReference type="GO" id="GO:0006310">
    <property type="term" value="P:DNA recombination"/>
    <property type="evidence" value="ECO:0007669"/>
    <property type="project" value="UniProtKB-UniRule"/>
</dbReference>
<dbReference type="GO" id="GO:0009893">
    <property type="term" value="P:positive regulation of metabolic process"/>
    <property type="evidence" value="ECO:0007669"/>
    <property type="project" value="UniProtKB-ARBA"/>
</dbReference>
<dbReference type="GO" id="GO:0006355">
    <property type="term" value="P:regulation of DNA-templated transcription"/>
    <property type="evidence" value="ECO:0007669"/>
    <property type="project" value="UniProtKB-UniRule"/>
</dbReference>
<dbReference type="GO" id="GO:0006417">
    <property type="term" value="P:regulation of translation"/>
    <property type="evidence" value="ECO:0007669"/>
    <property type="project" value="UniProtKB-UniRule"/>
</dbReference>
<dbReference type="CDD" id="cd13835">
    <property type="entry name" value="IHF_A"/>
    <property type="match status" value="1"/>
</dbReference>
<dbReference type="FunFam" id="4.10.520.10:FF:000002">
    <property type="entry name" value="Integration host factor subunit alpha"/>
    <property type="match status" value="1"/>
</dbReference>
<dbReference type="Gene3D" id="4.10.520.10">
    <property type="entry name" value="IHF-like DNA-binding proteins"/>
    <property type="match status" value="1"/>
</dbReference>
<dbReference type="HAMAP" id="MF_00380">
    <property type="entry name" value="IHF_alpha"/>
    <property type="match status" value="1"/>
</dbReference>
<dbReference type="InterPro" id="IPR000119">
    <property type="entry name" value="Hist_DNA-bd"/>
</dbReference>
<dbReference type="InterPro" id="IPR020816">
    <property type="entry name" value="Histone-like_DNA-bd_CS"/>
</dbReference>
<dbReference type="InterPro" id="IPR010992">
    <property type="entry name" value="IHF-like_DNA-bd_dom_sf"/>
</dbReference>
<dbReference type="InterPro" id="IPR005684">
    <property type="entry name" value="IHF_alpha"/>
</dbReference>
<dbReference type="NCBIfam" id="TIGR00987">
    <property type="entry name" value="himA"/>
    <property type="match status" value="1"/>
</dbReference>
<dbReference type="NCBIfam" id="NF001401">
    <property type="entry name" value="PRK00285.1"/>
    <property type="match status" value="1"/>
</dbReference>
<dbReference type="PANTHER" id="PTHR33175">
    <property type="entry name" value="DNA-BINDING PROTEIN HU"/>
    <property type="match status" value="1"/>
</dbReference>
<dbReference type="PANTHER" id="PTHR33175:SF2">
    <property type="entry name" value="INTEGRATION HOST FACTOR SUBUNIT ALPHA"/>
    <property type="match status" value="1"/>
</dbReference>
<dbReference type="Pfam" id="PF00216">
    <property type="entry name" value="Bac_DNA_binding"/>
    <property type="match status" value="1"/>
</dbReference>
<dbReference type="PRINTS" id="PR01727">
    <property type="entry name" value="DNABINDINGHU"/>
</dbReference>
<dbReference type="SMART" id="SM00411">
    <property type="entry name" value="BHL"/>
    <property type="match status" value="1"/>
</dbReference>
<dbReference type="SUPFAM" id="SSF47729">
    <property type="entry name" value="IHF-like DNA-binding proteins"/>
    <property type="match status" value="1"/>
</dbReference>
<dbReference type="PROSITE" id="PS00045">
    <property type="entry name" value="HISTONE_LIKE"/>
    <property type="match status" value="1"/>
</dbReference>
<comment type="function">
    <text evidence="1">This protein is one of the two subunits of integration host factor, a specific DNA-binding protein that functions in genetic recombination as well as in transcriptional and translational control.</text>
</comment>
<comment type="subunit">
    <text evidence="1">Heterodimer of an alpha and a beta chain.</text>
</comment>
<comment type="similarity">
    <text evidence="1">Belongs to the bacterial histone-like protein family.</text>
</comment>
<name>IHFA_SALNS</name>
<evidence type="ECO:0000255" key="1">
    <source>
        <dbReference type="HAMAP-Rule" id="MF_00380"/>
    </source>
</evidence>
<evidence type="ECO:0000256" key="2">
    <source>
        <dbReference type="SAM" id="MobiDB-lite"/>
    </source>
</evidence>
<accession>B4T4N4</accession>
<keyword id="KW-0233">DNA recombination</keyword>
<keyword id="KW-0238">DNA-binding</keyword>
<keyword id="KW-0804">Transcription</keyword>
<keyword id="KW-0805">Transcription regulation</keyword>
<keyword id="KW-0810">Translation regulation</keyword>
<sequence length="99" mass="11368">MALTKAEMSEYLFDKLGLSKRDAKELVELFFEEIRRALENGEQVKLSGFGNFDLRDKNQRPGRNPKTGEDIPITARRVVTFRPGQKLKSRVENASPKEE</sequence>
<reference key="1">
    <citation type="journal article" date="2011" name="J. Bacteriol.">
        <title>Comparative genomics of 28 Salmonella enterica isolates: evidence for CRISPR-mediated adaptive sublineage evolution.</title>
        <authorList>
            <person name="Fricke W.F."/>
            <person name="Mammel M.K."/>
            <person name="McDermott P.F."/>
            <person name="Tartera C."/>
            <person name="White D.G."/>
            <person name="Leclerc J.E."/>
            <person name="Ravel J."/>
            <person name="Cebula T.A."/>
        </authorList>
    </citation>
    <scope>NUCLEOTIDE SEQUENCE [LARGE SCALE GENOMIC DNA]</scope>
    <source>
        <strain>SL254</strain>
    </source>
</reference>
<organism>
    <name type="scientific">Salmonella newport (strain SL254)</name>
    <dbReference type="NCBI Taxonomy" id="423368"/>
    <lineage>
        <taxon>Bacteria</taxon>
        <taxon>Pseudomonadati</taxon>
        <taxon>Pseudomonadota</taxon>
        <taxon>Gammaproteobacteria</taxon>
        <taxon>Enterobacterales</taxon>
        <taxon>Enterobacteriaceae</taxon>
        <taxon>Salmonella</taxon>
    </lineage>
</organism>